<dbReference type="EMBL" id="AM421808">
    <property type="protein sequence ID" value="CAM09890.1"/>
    <property type="molecule type" value="Genomic_DNA"/>
</dbReference>
<dbReference type="KEGG" id="nmc:NMC0596"/>
<dbReference type="HOGENOM" id="CLU_985210_0_0_4"/>
<dbReference type="Proteomes" id="UP000002286">
    <property type="component" value="Chromosome"/>
</dbReference>
<dbReference type="GO" id="GO:0009279">
    <property type="term" value="C:cell outer membrane"/>
    <property type="evidence" value="ECO:0007669"/>
    <property type="project" value="UniProtKB-SubCell"/>
</dbReference>
<dbReference type="GO" id="GO:0007155">
    <property type="term" value="P:cell adhesion"/>
    <property type="evidence" value="ECO:0007669"/>
    <property type="project" value="UniProtKB-KW"/>
</dbReference>
<dbReference type="PROSITE" id="PS51257">
    <property type="entry name" value="PROKAR_LIPOPROTEIN"/>
    <property type="match status" value="1"/>
</dbReference>
<protein>
    <recommendedName>
        <fullName>Adhesin MafA 1</fullName>
    </recommendedName>
</protein>
<accession>A1KSQ9</accession>
<name>MAFA1_NEIMF</name>
<feature type="signal peptide" evidence="1">
    <location>
        <begin position="1"/>
        <end position="14"/>
    </location>
</feature>
<feature type="chain" id="PRO_0000344490" description="Adhesin MafA 1">
    <location>
        <begin position="15"/>
        <end position="313"/>
    </location>
</feature>
<feature type="region of interest" description="Disordered" evidence="2">
    <location>
        <begin position="282"/>
        <end position="313"/>
    </location>
</feature>
<feature type="compositionally biased region" description="Polar residues" evidence="2">
    <location>
        <begin position="282"/>
        <end position="298"/>
    </location>
</feature>
<feature type="lipid moiety-binding region" description="N-palmitoyl cysteine" evidence="1">
    <location>
        <position position="15"/>
    </location>
</feature>
<feature type="lipid moiety-binding region" description="S-diacylglycerol cysteine" evidence="1">
    <location>
        <position position="15"/>
    </location>
</feature>
<gene>
    <name type="primary">mafA1</name>
    <name type="ordered locus">NMC0596</name>
</gene>
<reference key="1">
    <citation type="journal article" date="2007" name="PLoS Genet.">
        <title>Meningococcal genetic variation mechanisms viewed through comparative analysis of serogroup C strain FAM18.</title>
        <authorList>
            <person name="Bentley S.D."/>
            <person name="Vernikos G.S."/>
            <person name="Snyder L.A.S."/>
            <person name="Churcher C."/>
            <person name="Arrowsmith C."/>
            <person name="Chillingworth T."/>
            <person name="Cronin A."/>
            <person name="Davis P.H."/>
            <person name="Holroyd N.E."/>
            <person name="Jagels K."/>
            <person name="Maddison M."/>
            <person name="Moule S."/>
            <person name="Rabbinowitsch E."/>
            <person name="Sharp S."/>
            <person name="Unwin L."/>
            <person name="Whitehead S."/>
            <person name="Quail M.A."/>
            <person name="Achtman M."/>
            <person name="Barrell B.G."/>
            <person name="Saunders N.J."/>
            <person name="Parkhill J."/>
        </authorList>
    </citation>
    <scope>NUCLEOTIDE SEQUENCE [LARGE SCALE GENOMIC DNA]</scope>
    <source>
        <strain>ATCC 700532 / DSM 15464 / FAM18</strain>
    </source>
</reference>
<comment type="subcellular location">
    <subcellularLocation>
        <location evidence="3">Cell outer membrane</location>
        <topology evidence="1">Lipid-anchor</topology>
    </subcellularLocation>
</comment>
<comment type="similarity">
    <text evidence="3">Belongs to the MafA family.</text>
</comment>
<evidence type="ECO:0000255" key="1">
    <source>
        <dbReference type="PROSITE-ProRule" id="PRU00303"/>
    </source>
</evidence>
<evidence type="ECO:0000256" key="2">
    <source>
        <dbReference type="SAM" id="MobiDB-lite"/>
    </source>
</evidence>
<evidence type="ECO:0000305" key="3"/>
<sequence>MKILLLLIPLVLTACGTLTGIPAHGGGKRFAVEQELVAASSRAAVKEMDLSALKGRKAALYVSVMGDQGSGNISGGRYSIDALIRGGYHNNPESATQYSYPAYDTTATTKSDALSSVTTSTSVLNAPAAALTRNSGRKGERSAGLSVNGTGDYRNETLLANPRDVSFLTNLIQTVFYLRGIEVVPPEYADTDVFVTVDVFGTVRSRTELHLYNAETLKAQTKLEYFAVDRDSRKLLIAPKTAAYESQYQEQYALWMGPYSVGKTVKASDRLMVDFSDITPYGDTTAQNRPDFKQNNGKNPDVGNEVIRRRKGG</sequence>
<keyword id="KW-0130">Cell adhesion</keyword>
<keyword id="KW-0998">Cell outer membrane</keyword>
<keyword id="KW-0449">Lipoprotein</keyword>
<keyword id="KW-0472">Membrane</keyword>
<keyword id="KW-0564">Palmitate</keyword>
<keyword id="KW-0732">Signal</keyword>
<keyword id="KW-0843">Virulence</keyword>
<proteinExistence type="inferred from homology"/>
<organism>
    <name type="scientific">Neisseria meningitidis serogroup C / serotype 2a (strain ATCC 700532 / DSM 15464 / FAM18)</name>
    <dbReference type="NCBI Taxonomy" id="272831"/>
    <lineage>
        <taxon>Bacteria</taxon>
        <taxon>Pseudomonadati</taxon>
        <taxon>Pseudomonadota</taxon>
        <taxon>Betaproteobacteria</taxon>
        <taxon>Neisseriales</taxon>
        <taxon>Neisseriaceae</taxon>
        <taxon>Neisseria</taxon>
    </lineage>
</organism>